<keyword id="KW-0002">3D-structure</keyword>
<keyword id="KW-0007">Acetylation</keyword>
<keyword id="KW-0025">Alternative splicing</keyword>
<keyword id="KW-0175">Coiled coil</keyword>
<keyword id="KW-0963">Cytoplasm</keyword>
<keyword id="KW-0903">Direct protein sequencing</keyword>
<keyword id="KW-1017">Isopeptide bond</keyword>
<keyword id="KW-0472">Membrane</keyword>
<keyword id="KW-0496">Mitochondrion</keyword>
<keyword id="KW-1000">Mitochondrion outer membrane</keyword>
<keyword id="KW-1185">Reference proteome</keyword>
<keyword id="KW-0812">Transmembrane</keyword>
<keyword id="KW-1133">Transmembrane helix</keyword>
<keyword id="KW-0832">Ubl conjugation</keyword>
<reference key="1">
    <citation type="journal article" date="1999" name="J. Neurochem.">
        <title>Isolation of 10 differentially expressed cDNAs in differentiated Neuro2a cells induced through controlled expression of the GD3 synthase gene.</title>
        <authorList>
            <person name="Liu H."/>
            <person name="Nakagawa T."/>
            <person name="Kanematsu T."/>
            <person name="Uchida T."/>
            <person name="Tsuji S."/>
        </authorList>
    </citation>
    <scope>NUCLEOTIDE SEQUENCE [MRNA] (ISOFORM 1)</scope>
    <scope>INDUCTION</scope>
    <source>
        <strain>ICR</strain>
        <tissue>Brain</tissue>
    </source>
</reference>
<reference key="2">
    <citation type="journal article" date="2005" name="Science">
        <title>The transcriptional landscape of the mammalian genome.</title>
        <authorList>
            <person name="Carninci P."/>
            <person name="Kasukawa T."/>
            <person name="Katayama S."/>
            <person name="Gough J."/>
            <person name="Frith M.C."/>
            <person name="Maeda N."/>
            <person name="Oyama R."/>
            <person name="Ravasi T."/>
            <person name="Lenhard B."/>
            <person name="Wells C."/>
            <person name="Kodzius R."/>
            <person name="Shimokawa K."/>
            <person name="Bajic V.B."/>
            <person name="Brenner S.E."/>
            <person name="Batalov S."/>
            <person name="Forrest A.R."/>
            <person name="Zavolan M."/>
            <person name="Davis M.J."/>
            <person name="Wilming L.G."/>
            <person name="Aidinis V."/>
            <person name="Allen J.E."/>
            <person name="Ambesi-Impiombato A."/>
            <person name="Apweiler R."/>
            <person name="Aturaliya R.N."/>
            <person name="Bailey T.L."/>
            <person name="Bansal M."/>
            <person name="Baxter L."/>
            <person name="Beisel K.W."/>
            <person name="Bersano T."/>
            <person name="Bono H."/>
            <person name="Chalk A.M."/>
            <person name="Chiu K.P."/>
            <person name="Choudhary V."/>
            <person name="Christoffels A."/>
            <person name="Clutterbuck D.R."/>
            <person name="Crowe M.L."/>
            <person name="Dalla E."/>
            <person name="Dalrymple B.P."/>
            <person name="de Bono B."/>
            <person name="Della Gatta G."/>
            <person name="di Bernardo D."/>
            <person name="Down T."/>
            <person name="Engstrom P."/>
            <person name="Fagiolini M."/>
            <person name="Faulkner G."/>
            <person name="Fletcher C.F."/>
            <person name="Fukushima T."/>
            <person name="Furuno M."/>
            <person name="Futaki S."/>
            <person name="Gariboldi M."/>
            <person name="Georgii-Hemming P."/>
            <person name="Gingeras T.R."/>
            <person name="Gojobori T."/>
            <person name="Green R.E."/>
            <person name="Gustincich S."/>
            <person name="Harbers M."/>
            <person name="Hayashi Y."/>
            <person name="Hensch T.K."/>
            <person name="Hirokawa N."/>
            <person name="Hill D."/>
            <person name="Huminiecki L."/>
            <person name="Iacono M."/>
            <person name="Ikeo K."/>
            <person name="Iwama A."/>
            <person name="Ishikawa T."/>
            <person name="Jakt M."/>
            <person name="Kanapin A."/>
            <person name="Katoh M."/>
            <person name="Kawasawa Y."/>
            <person name="Kelso J."/>
            <person name="Kitamura H."/>
            <person name="Kitano H."/>
            <person name="Kollias G."/>
            <person name="Krishnan S.P."/>
            <person name="Kruger A."/>
            <person name="Kummerfeld S.K."/>
            <person name="Kurochkin I.V."/>
            <person name="Lareau L.F."/>
            <person name="Lazarevic D."/>
            <person name="Lipovich L."/>
            <person name="Liu J."/>
            <person name="Liuni S."/>
            <person name="McWilliam S."/>
            <person name="Madan Babu M."/>
            <person name="Madera M."/>
            <person name="Marchionni L."/>
            <person name="Matsuda H."/>
            <person name="Matsuzawa S."/>
            <person name="Miki H."/>
            <person name="Mignone F."/>
            <person name="Miyake S."/>
            <person name="Morris K."/>
            <person name="Mottagui-Tabar S."/>
            <person name="Mulder N."/>
            <person name="Nakano N."/>
            <person name="Nakauchi H."/>
            <person name="Ng P."/>
            <person name="Nilsson R."/>
            <person name="Nishiguchi S."/>
            <person name="Nishikawa S."/>
            <person name="Nori F."/>
            <person name="Ohara O."/>
            <person name="Okazaki Y."/>
            <person name="Orlando V."/>
            <person name="Pang K.C."/>
            <person name="Pavan W.J."/>
            <person name="Pavesi G."/>
            <person name="Pesole G."/>
            <person name="Petrovsky N."/>
            <person name="Piazza S."/>
            <person name="Reed J."/>
            <person name="Reid J.F."/>
            <person name="Ring B.Z."/>
            <person name="Ringwald M."/>
            <person name="Rost B."/>
            <person name="Ruan Y."/>
            <person name="Salzberg S.L."/>
            <person name="Sandelin A."/>
            <person name="Schneider C."/>
            <person name="Schoenbach C."/>
            <person name="Sekiguchi K."/>
            <person name="Semple C.A."/>
            <person name="Seno S."/>
            <person name="Sessa L."/>
            <person name="Sheng Y."/>
            <person name="Shibata Y."/>
            <person name="Shimada H."/>
            <person name="Shimada K."/>
            <person name="Silva D."/>
            <person name="Sinclair B."/>
            <person name="Sperling S."/>
            <person name="Stupka E."/>
            <person name="Sugiura K."/>
            <person name="Sultana R."/>
            <person name="Takenaka Y."/>
            <person name="Taki K."/>
            <person name="Tammoja K."/>
            <person name="Tan S.L."/>
            <person name="Tang S."/>
            <person name="Taylor M.S."/>
            <person name="Tegner J."/>
            <person name="Teichmann S.A."/>
            <person name="Ueda H.R."/>
            <person name="van Nimwegen E."/>
            <person name="Verardo R."/>
            <person name="Wei C.L."/>
            <person name="Yagi K."/>
            <person name="Yamanishi H."/>
            <person name="Zabarovsky E."/>
            <person name="Zhu S."/>
            <person name="Zimmer A."/>
            <person name="Hide W."/>
            <person name="Bult C."/>
            <person name="Grimmond S.M."/>
            <person name="Teasdale R.D."/>
            <person name="Liu E.T."/>
            <person name="Brusic V."/>
            <person name="Quackenbush J."/>
            <person name="Wahlestedt C."/>
            <person name="Mattick J.S."/>
            <person name="Hume D.A."/>
            <person name="Kai C."/>
            <person name="Sasaki D."/>
            <person name="Tomaru Y."/>
            <person name="Fukuda S."/>
            <person name="Kanamori-Katayama M."/>
            <person name="Suzuki M."/>
            <person name="Aoki J."/>
            <person name="Arakawa T."/>
            <person name="Iida J."/>
            <person name="Imamura K."/>
            <person name="Itoh M."/>
            <person name="Kato T."/>
            <person name="Kawaji H."/>
            <person name="Kawagashira N."/>
            <person name="Kawashima T."/>
            <person name="Kojima M."/>
            <person name="Kondo S."/>
            <person name="Konno H."/>
            <person name="Nakano K."/>
            <person name="Ninomiya N."/>
            <person name="Nishio T."/>
            <person name="Okada M."/>
            <person name="Plessy C."/>
            <person name="Shibata K."/>
            <person name="Shiraki T."/>
            <person name="Suzuki S."/>
            <person name="Tagami M."/>
            <person name="Waki K."/>
            <person name="Watahiki A."/>
            <person name="Okamura-Oho Y."/>
            <person name="Suzuki H."/>
            <person name="Kawai J."/>
            <person name="Hayashizaki Y."/>
        </authorList>
    </citation>
    <scope>NUCLEOTIDE SEQUENCE [LARGE SCALE MRNA] (ISOFORMS 1 AND 2)</scope>
    <source>
        <strain>C57BL/6J</strain>
        <tissue>Brain</tissue>
        <tissue>Spinal cord</tissue>
        <tissue>Spinal ganglion</tissue>
    </source>
</reference>
<reference key="3">
    <citation type="journal article" date="2004" name="Genome Res.">
        <title>The status, quality, and expansion of the NIH full-length cDNA project: the Mammalian Gene Collection (MGC).</title>
        <authorList>
            <consortium name="The MGC Project Team"/>
        </authorList>
    </citation>
    <scope>NUCLEOTIDE SEQUENCE [LARGE SCALE MRNA] (ISOFORM 1)</scope>
    <source>
        <strain>C57BL/6J</strain>
        <tissue>Brain</tissue>
    </source>
</reference>
<reference key="4">
    <citation type="submission" date="2007-04" db="UniProtKB">
        <authorList>
            <person name="Lubec G."/>
            <person name="Kang S.U."/>
        </authorList>
    </citation>
    <scope>PROTEIN SEQUENCE OF 162-172; 215-225 AND 292-310</scope>
    <scope>IDENTIFICATION BY MASS SPECTROMETRY</scope>
    <source>
        <strain>C57BL/6J</strain>
        <tissue>Brain</tissue>
    </source>
</reference>
<reference key="5">
    <citation type="journal article" date="2005" name="J. Cell Biol.">
        <title>Ganglioside-induced differentiation associated protein 1 is a regulator of the mitochondrial network: new implications for Charcot-Marie-Tooth disease.</title>
        <authorList>
            <person name="Niemann A."/>
            <person name="Ruegg M."/>
            <person name="La Padula V."/>
            <person name="Schenone A."/>
            <person name="Suter U."/>
        </authorList>
    </citation>
    <scope>TISSUE SPECIFICITY</scope>
    <scope>SUBCELLULAR LOCATION</scope>
    <scope>FUNCTION</scope>
</reference>
<reference key="6">
    <citation type="journal article" date="2010" name="Cell">
        <title>A tissue-specific atlas of mouse protein phosphorylation and expression.</title>
        <authorList>
            <person name="Huttlin E.L."/>
            <person name="Jedrychowski M.P."/>
            <person name="Elias J.E."/>
            <person name="Goswami T."/>
            <person name="Rad R."/>
            <person name="Beausoleil S.A."/>
            <person name="Villen J."/>
            <person name="Haas W."/>
            <person name="Sowa M.E."/>
            <person name="Gygi S.P."/>
        </authorList>
    </citation>
    <scope>IDENTIFICATION BY MASS SPECTROMETRY [LARGE SCALE ANALYSIS]</scope>
    <source>
        <tissue>Brain</tissue>
    </source>
</reference>
<sequence length="358" mass="41311">MARRQDEARAGVPLRVEGPPDKEVHLILYHWTHSFSSQKVRLVIAEKALKCEEHDVSLPLSEHNEPWFMRLNSAGEVPVLVHGENIICEATQIIDYLEQTFLDERTPRLMPDEGSMYYPRVQHYRELLDSLPMDAYTHGCILHPELTVDSMIPAYATTRIRSQIGNTESELKKLAEENPDLQEAYIAKQKRLKSKLLDHDNVKYLKKILDELEKVLDQVETELQRRNEETPEEGNQPWLCGESFTLADVSLAVTLHRLKFLGFARRNWGHGKRPNLETYYERVLKRKTFNKVLGHVNNILISAVLPTAFRVAKKRAPKVLGSTLVVGLLVGMGYFAFMLFRRRLGSMILALRPRPNYF</sequence>
<accession>O88741</accession>
<accession>Q8C7Q5</accession>
<accession>Q9CTN2</accession>
<comment type="function">
    <text evidence="1 5">Regulates the mitochondrial network by promoting mitochondrial fission.</text>
</comment>
<comment type="subunit">
    <text evidence="1">Homodimer.</text>
</comment>
<comment type="subcellular location">
    <subcellularLocation>
        <location evidence="2">Mitochondrion outer membrane</location>
        <topology evidence="2">Multi-pass membrane protein</topology>
    </subcellularLocation>
    <subcellularLocation>
        <location evidence="5">Cytoplasm</location>
    </subcellularLocation>
</comment>
<comment type="alternative products">
    <event type="alternative splicing"/>
    <isoform>
        <id>O88741-1</id>
        <name>1</name>
        <sequence type="displayed"/>
    </isoform>
    <isoform>
        <id>O88741-2</id>
        <name>2</name>
        <sequence type="described" ref="VSP_008791 VSP_008792"/>
    </isoform>
</comment>
<comment type="tissue specificity">
    <text evidence="5">Expressed in brain, spinal cord, muscles and intestinal villi. In the central nervous system expressed most prominently in the cortex, cerebellum, thalamus, olfactory bulb, and spinal cord. Expressed also in sciatic nerves and in dorsal root ganglia.</text>
</comment>
<comment type="developmental stage">
    <text>First expressed at embryonic stage 13 dpc. Levels then increase gradually to reach maximum levels at adulthood.</text>
</comment>
<comment type="induction">
    <text evidence="4">Increased expression during neural differentiation.</text>
</comment>
<comment type="PTM">
    <text evidence="2">Ubiquitinated by PRKN during mitophagy, leading to its degradation and enhancement of mitophagy. Deubiquitinated by USP30.</text>
</comment>
<comment type="similarity">
    <text evidence="7">Belongs to the GST superfamily.</text>
</comment>
<comment type="caution">
    <text evidence="7">While belonging to the GST superfamily, it lacks glutathione transferase activity.</text>
</comment>
<protein>
    <recommendedName>
        <fullName>Ganglioside-induced differentiation-associated protein 1</fullName>
        <shortName>GDAP1</shortName>
    </recommendedName>
</protein>
<organism>
    <name type="scientific">Mus musculus</name>
    <name type="common">Mouse</name>
    <dbReference type="NCBI Taxonomy" id="10090"/>
    <lineage>
        <taxon>Eukaryota</taxon>
        <taxon>Metazoa</taxon>
        <taxon>Chordata</taxon>
        <taxon>Craniata</taxon>
        <taxon>Vertebrata</taxon>
        <taxon>Euteleostomi</taxon>
        <taxon>Mammalia</taxon>
        <taxon>Eutheria</taxon>
        <taxon>Euarchontoglires</taxon>
        <taxon>Glires</taxon>
        <taxon>Rodentia</taxon>
        <taxon>Myomorpha</taxon>
        <taxon>Muroidea</taxon>
        <taxon>Muridae</taxon>
        <taxon>Murinae</taxon>
        <taxon>Mus</taxon>
        <taxon>Mus</taxon>
    </lineage>
</organism>
<feature type="chain" id="PRO_0000186039" description="Ganglioside-induced differentiation-associated protein 1">
    <location>
        <begin position="1"/>
        <end position="358"/>
    </location>
</feature>
<feature type="transmembrane region" description="Helical" evidence="3">
    <location>
        <begin position="292"/>
        <end position="312"/>
    </location>
</feature>
<feature type="transmembrane region" description="Helical" evidence="3">
    <location>
        <begin position="320"/>
        <end position="340"/>
    </location>
</feature>
<feature type="domain" description="GST N-terminal">
    <location>
        <begin position="24"/>
        <end position="105"/>
    </location>
</feature>
<feature type="domain" description="GST C-terminal">
    <location>
        <begin position="153"/>
        <end position="309"/>
    </location>
</feature>
<feature type="region of interest" description="Required for mitochondrial localization" evidence="1">
    <location>
        <begin position="320"/>
        <end position="358"/>
    </location>
</feature>
<feature type="modified residue" description="N6-acetyllysine; alternate" evidence="2">
    <location>
        <position position="203"/>
    </location>
</feature>
<feature type="cross-link" description="Glycyl lysine isopeptide (Lys-Gly) (interchain with G-Cter in ubiquitin)" evidence="2">
    <location>
        <position position="50"/>
    </location>
</feature>
<feature type="cross-link" description="Glycyl lysine isopeptide (Lys-Gly) (interchain with G-Cter in ubiquitin)" evidence="2">
    <location>
        <position position="172"/>
    </location>
</feature>
<feature type="cross-link" description="Glycyl lysine isopeptide (Lys-Gly) (interchain with G-Cter in ubiquitin)" evidence="2">
    <location>
        <position position="173"/>
    </location>
</feature>
<feature type="cross-link" description="Glycyl lysine isopeptide (Lys-Gly) (interchain with G-Cter in ubiquitin)" evidence="2">
    <location>
        <position position="188"/>
    </location>
</feature>
<feature type="cross-link" description="Glycyl lysine isopeptide (Lys-Gly) (interchain with G-Cter in ubiquitin)" evidence="2">
    <location>
        <position position="190"/>
    </location>
</feature>
<feature type="cross-link" description="Glycyl lysine isopeptide (Lys-Gly) (interchain with G-Cter in ubiquitin); alternate" evidence="2">
    <location>
        <position position="203"/>
    </location>
</feature>
<feature type="cross-link" description="Glycyl lysine isopeptide (Lys-Gly) (interchain with G-Cter in ubiquitin)" evidence="2">
    <location>
        <position position="206"/>
    </location>
</feature>
<feature type="cross-link" description="Glycyl lysine isopeptide (Lys-Gly) (interchain with G-Cter in ubiquitin)" evidence="2">
    <location>
        <position position="207"/>
    </location>
</feature>
<feature type="cross-link" description="Glycyl lysine isopeptide (Lys-Gly) (interchain with G-Cter in ubiquitin)" evidence="2">
    <location>
        <position position="214"/>
    </location>
</feature>
<feature type="splice variant" id="VSP_008791" description="In isoform 2." evidence="6">
    <original>Q</original>
    <variation>M</variation>
    <location>
        <position position="163"/>
    </location>
</feature>
<feature type="splice variant" id="VSP_008792" description="In isoform 2." evidence="6">
    <location>
        <begin position="164"/>
        <end position="358"/>
    </location>
</feature>
<feature type="strand" evidence="8">
    <location>
        <begin position="26"/>
        <end position="30"/>
    </location>
</feature>
<feature type="helix" evidence="8">
    <location>
        <begin position="35"/>
        <end position="46"/>
    </location>
</feature>
<feature type="strand" evidence="8">
    <location>
        <begin position="51"/>
        <end position="55"/>
    </location>
</feature>
<feature type="helix" evidence="8">
    <location>
        <begin position="60"/>
        <end position="62"/>
    </location>
</feature>
<feature type="turn" evidence="8">
    <location>
        <begin position="67"/>
        <end position="69"/>
    </location>
</feature>
<feature type="turn" evidence="8">
    <location>
        <begin position="73"/>
        <end position="75"/>
    </location>
</feature>
<feature type="strand" evidence="8">
    <location>
        <begin position="79"/>
        <end position="82"/>
    </location>
</feature>
<feature type="strand" evidence="8">
    <location>
        <begin position="85"/>
        <end position="89"/>
    </location>
</feature>
<feature type="helix" evidence="8">
    <location>
        <begin position="90"/>
        <end position="100"/>
    </location>
</feature>
<feature type="strand" evidence="8">
    <location>
        <begin position="104"/>
        <end position="106"/>
    </location>
</feature>
<feature type="helix" evidence="8">
    <location>
        <begin position="117"/>
        <end position="129"/>
    </location>
</feature>
<feature type="helix" evidence="8">
    <location>
        <begin position="133"/>
        <end position="142"/>
    </location>
</feature>
<feature type="helix" evidence="8">
    <location>
        <begin position="144"/>
        <end position="146"/>
    </location>
</feature>
<feature type="helix" evidence="8">
    <location>
        <begin position="202"/>
        <end position="229"/>
    </location>
</feature>
<feature type="strand" evidence="8">
    <location>
        <begin position="232"/>
        <end position="234"/>
    </location>
</feature>
<feature type="strand" evidence="8">
    <location>
        <begin position="239"/>
        <end position="243"/>
    </location>
</feature>
<feature type="helix" evidence="8">
    <location>
        <begin position="246"/>
        <end position="261"/>
    </location>
</feature>
<feature type="helix" evidence="8">
    <location>
        <begin position="264"/>
        <end position="267"/>
    </location>
</feature>
<feature type="strand" evidence="8">
    <location>
        <begin position="270"/>
        <end position="273"/>
    </location>
</feature>
<feature type="helix" evidence="8">
    <location>
        <begin position="274"/>
        <end position="284"/>
    </location>
</feature>
<feature type="helix" evidence="8">
    <location>
        <begin position="287"/>
        <end position="292"/>
    </location>
</feature>
<feature type="turn" evidence="8">
    <location>
        <begin position="295"/>
        <end position="297"/>
    </location>
</feature>
<dbReference type="EMBL" id="Y17850">
    <property type="protein sequence ID" value="CAA76893.1"/>
    <property type="molecule type" value="mRNA"/>
</dbReference>
<dbReference type="EMBL" id="AK020988">
    <property type="protein sequence ID" value="BAB32270.1"/>
    <property type="molecule type" value="mRNA"/>
</dbReference>
<dbReference type="EMBL" id="AK045460">
    <property type="protein sequence ID" value="BAC32380.1"/>
    <property type="molecule type" value="mRNA"/>
</dbReference>
<dbReference type="EMBL" id="AK049655">
    <property type="protein sequence ID" value="BAC33861.1"/>
    <property type="molecule type" value="mRNA"/>
</dbReference>
<dbReference type="EMBL" id="AK083814">
    <property type="protein sequence ID" value="BAC39027.1"/>
    <property type="molecule type" value="mRNA"/>
</dbReference>
<dbReference type="EMBL" id="BC048177">
    <property type="protein sequence ID" value="AAH48177.1"/>
    <property type="molecule type" value="mRNA"/>
</dbReference>
<dbReference type="EMBL" id="BC051135">
    <property type="protein sequence ID" value="AAH51135.1"/>
    <property type="molecule type" value="mRNA"/>
</dbReference>
<dbReference type="CCDS" id="CCDS14834.1">
    <molecule id="O88741-1"/>
</dbReference>
<dbReference type="RefSeq" id="NP_034397.1">
    <molecule id="O88741-1"/>
    <property type="nucleotide sequence ID" value="NM_010267.4"/>
</dbReference>
<dbReference type="RefSeq" id="XP_036016287.1">
    <molecule id="O88741-1"/>
    <property type="nucleotide sequence ID" value="XM_036160394.1"/>
</dbReference>
<dbReference type="PDB" id="8EXZ">
    <property type="method" value="X-ray"/>
    <property type="resolution" value="2.82 A"/>
    <property type="chains" value="A/B=1-358"/>
</dbReference>
<dbReference type="PDBsum" id="8EXZ"/>
<dbReference type="SMR" id="O88741"/>
<dbReference type="BioGRID" id="199873">
    <property type="interactions" value="4"/>
</dbReference>
<dbReference type="FunCoup" id="O88741">
    <property type="interactions" value="1103"/>
</dbReference>
<dbReference type="STRING" id="10090.ENSMUSP00000026879"/>
<dbReference type="iPTMnet" id="O88741"/>
<dbReference type="PhosphoSitePlus" id="O88741"/>
<dbReference type="SwissPalm" id="O88741"/>
<dbReference type="PaxDb" id="10090-ENSMUSP00000026879"/>
<dbReference type="PeptideAtlas" id="O88741"/>
<dbReference type="ProteomicsDB" id="267425">
    <molecule id="O88741-1"/>
</dbReference>
<dbReference type="ProteomicsDB" id="267426">
    <molecule id="O88741-2"/>
</dbReference>
<dbReference type="Antibodypedia" id="2988">
    <property type="antibodies" value="124 antibodies from 23 providers"/>
</dbReference>
<dbReference type="DNASU" id="14545"/>
<dbReference type="Ensembl" id="ENSMUST00000026879.8">
    <molecule id="O88741-1"/>
    <property type="protein sequence ID" value="ENSMUSP00000026879.8"/>
    <property type="gene ID" value="ENSMUSG00000025777.9"/>
</dbReference>
<dbReference type="GeneID" id="14545"/>
<dbReference type="KEGG" id="mmu:14545"/>
<dbReference type="UCSC" id="uc007akb.2">
    <molecule id="O88741-2"/>
    <property type="organism name" value="mouse"/>
</dbReference>
<dbReference type="UCSC" id="uc007akc.2">
    <molecule id="O88741-1"/>
    <property type="organism name" value="mouse"/>
</dbReference>
<dbReference type="AGR" id="MGI:1338002"/>
<dbReference type="CTD" id="54332"/>
<dbReference type="MGI" id="MGI:1338002">
    <property type="gene designation" value="Gdap1"/>
</dbReference>
<dbReference type="VEuPathDB" id="HostDB:ENSMUSG00000025777"/>
<dbReference type="eggNOG" id="KOG4420">
    <property type="taxonomic scope" value="Eukaryota"/>
</dbReference>
<dbReference type="GeneTree" id="ENSGT00940000159124"/>
<dbReference type="HOGENOM" id="CLU_049129_0_0_1"/>
<dbReference type="InParanoid" id="O88741"/>
<dbReference type="OMA" id="LHCEEYD"/>
<dbReference type="OrthoDB" id="249703at2759"/>
<dbReference type="PhylomeDB" id="O88741"/>
<dbReference type="TreeFam" id="TF327072"/>
<dbReference type="Reactome" id="R-MMU-9603798">
    <property type="pathway name" value="Class I peroxisomal membrane protein import"/>
</dbReference>
<dbReference type="BioGRID-ORCS" id="14545">
    <property type="hits" value="1 hit in 78 CRISPR screens"/>
</dbReference>
<dbReference type="CD-CODE" id="CE726F99">
    <property type="entry name" value="Postsynaptic density"/>
</dbReference>
<dbReference type="ChiTaRS" id="Gdap1">
    <property type="organism name" value="mouse"/>
</dbReference>
<dbReference type="PRO" id="PR:O88741"/>
<dbReference type="Proteomes" id="UP000000589">
    <property type="component" value="Chromosome 1"/>
</dbReference>
<dbReference type="RNAct" id="O88741">
    <property type="molecule type" value="protein"/>
</dbReference>
<dbReference type="Bgee" id="ENSMUSG00000025777">
    <property type="expression patterns" value="Expressed in barrel cortex and 164 other cell types or tissues"/>
</dbReference>
<dbReference type="ExpressionAtlas" id="O88741">
    <property type="expression patterns" value="baseline and differential"/>
</dbReference>
<dbReference type="GO" id="GO:0005829">
    <property type="term" value="C:cytosol"/>
    <property type="evidence" value="ECO:0007669"/>
    <property type="project" value="Ensembl"/>
</dbReference>
<dbReference type="GO" id="GO:0005741">
    <property type="term" value="C:mitochondrial outer membrane"/>
    <property type="evidence" value="ECO:0000250"/>
    <property type="project" value="UniProtKB"/>
</dbReference>
<dbReference type="GO" id="GO:0071305">
    <property type="term" value="P:cellular response to vitamin D"/>
    <property type="evidence" value="ECO:0007669"/>
    <property type="project" value="Ensembl"/>
</dbReference>
<dbReference type="GO" id="GO:0000266">
    <property type="term" value="P:mitochondrial fission"/>
    <property type="evidence" value="ECO:0000250"/>
    <property type="project" value="UniProtKB"/>
</dbReference>
<dbReference type="GO" id="GO:0008053">
    <property type="term" value="P:mitochondrial fusion"/>
    <property type="evidence" value="ECO:0007669"/>
    <property type="project" value="Ensembl"/>
</dbReference>
<dbReference type="GO" id="GO:0006626">
    <property type="term" value="P:protein targeting to mitochondrion"/>
    <property type="evidence" value="ECO:0000250"/>
    <property type="project" value="UniProtKB"/>
</dbReference>
<dbReference type="GO" id="GO:0032526">
    <property type="term" value="P:response to retinoic acid"/>
    <property type="evidence" value="ECO:0000314"/>
    <property type="project" value="MGI"/>
</dbReference>
<dbReference type="CDD" id="cd10303">
    <property type="entry name" value="GST_C_GDAP1"/>
    <property type="match status" value="1"/>
</dbReference>
<dbReference type="CDD" id="cd03052">
    <property type="entry name" value="GST_N_GDAP1"/>
    <property type="match status" value="1"/>
</dbReference>
<dbReference type="FunFam" id="1.20.1050.10:FF:000022">
    <property type="entry name" value="ganglioside-induced differentiation-associated protein 1 isoform X1"/>
    <property type="match status" value="1"/>
</dbReference>
<dbReference type="FunFam" id="3.40.30.10:FF:000113">
    <property type="entry name" value="ganglioside-induced differentiation-associated protein 1 isoform X1"/>
    <property type="match status" value="1"/>
</dbReference>
<dbReference type="Gene3D" id="1.20.1050.10">
    <property type="match status" value="1"/>
</dbReference>
<dbReference type="Gene3D" id="3.40.30.10">
    <property type="entry name" value="Glutaredoxin"/>
    <property type="match status" value="1"/>
</dbReference>
<dbReference type="InterPro" id="IPR010987">
    <property type="entry name" value="Glutathione-S-Trfase_C-like"/>
</dbReference>
<dbReference type="InterPro" id="IPR036282">
    <property type="entry name" value="Glutathione-S-Trfase_C_sf"/>
</dbReference>
<dbReference type="InterPro" id="IPR040079">
    <property type="entry name" value="Glutathione_S-Trfase"/>
</dbReference>
<dbReference type="InterPro" id="IPR004045">
    <property type="entry name" value="Glutathione_S-Trfase_N"/>
</dbReference>
<dbReference type="InterPro" id="IPR034336">
    <property type="entry name" value="GST_C_GDAP1"/>
</dbReference>
<dbReference type="InterPro" id="IPR036249">
    <property type="entry name" value="Thioredoxin-like_sf"/>
</dbReference>
<dbReference type="PANTHER" id="PTHR44188:SF3">
    <property type="entry name" value="GANGLIOSIDE-INDUCED DIFFERENTIATION-ASSOCIATED PROTEIN 1"/>
    <property type="match status" value="1"/>
</dbReference>
<dbReference type="PANTHER" id="PTHR44188">
    <property type="entry name" value="GDAP1, ISOFORM A"/>
    <property type="match status" value="1"/>
</dbReference>
<dbReference type="Pfam" id="PF13410">
    <property type="entry name" value="GST_C_2"/>
    <property type="match status" value="1"/>
</dbReference>
<dbReference type="Pfam" id="PF13417">
    <property type="entry name" value="GST_N_3"/>
    <property type="match status" value="1"/>
</dbReference>
<dbReference type="SFLD" id="SFLDS00019">
    <property type="entry name" value="Glutathione_Transferase_(cytos"/>
    <property type="match status" value="1"/>
</dbReference>
<dbReference type="SFLD" id="SFLDG00358">
    <property type="entry name" value="Main_(cytGST)"/>
    <property type="match status" value="1"/>
</dbReference>
<dbReference type="SUPFAM" id="SSF47616">
    <property type="entry name" value="GST C-terminal domain-like"/>
    <property type="match status" value="1"/>
</dbReference>
<dbReference type="SUPFAM" id="SSF52833">
    <property type="entry name" value="Thioredoxin-like"/>
    <property type="match status" value="1"/>
</dbReference>
<dbReference type="PROSITE" id="PS50405">
    <property type="entry name" value="GST_CTER"/>
    <property type="match status" value="1"/>
</dbReference>
<dbReference type="PROSITE" id="PS50404">
    <property type="entry name" value="GST_NTER"/>
    <property type="match status" value="1"/>
</dbReference>
<evidence type="ECO:0000250" key="1"/>
<evidence type="ECO:0000250" key="2">
    <source>
        <dbReference type="UniProtKB" id="Q8TB36"/>
    </source>
</evidence>
<evidence type="ECO:0000255" key="3"/>
<evidence type="ECO:0000269" key="4">
    <source>
    </source>
</evidence>
<evidence type="ECO:0000269" key="5">
    <source>
    </source>
</evidence>
<evidence type="ECO:0000303" key="6">
    <source>
    </source>
</evidence>
<evidence type="ECO:0000305" key="7"/>
<evidence type="ECO:0007829" key="8">
    <source>
        <dbReference type="PDB" id="8EXZ"/>
    </source>
</evidence>
<gene>
    <name type="primary">Gdap1</name>
</gene>
<proteinExistence type="evidence at protein level"/>
<name>GDAP1_MOUSE</name>